<organism>
    <name type="scientific">Streptococcus pyogenes serotype M5 (strain Manfredo)</name>
    <dbReference type="NCBI Taxonomy" id="160491"/>
    <lineage>
        <taxon>Bacteria</taxon>
        <taxon>Bacillati</taxon>
        <taxon>Bacillota</taxon>
        <taxon>Bacilli</taxon>
        <taxon>Lactobacillales</taxon>
        <taxon>Streptococcaceae</taxon>
        <taxon>Streptococcus</taxon>
    </lineage>
</organism>
<evidence type="ECO:0000255" key="1">
    <source>
        <dbReference type="HAMAP-Rule" id="MF_01315"/>
    </source>
</evidence>
<evidence type="ECO:0000256" key="2">
    <source>
        <dbReference type="SAM" id="MobiDB-lite"/>
    </source>
</evidence>
<evidence type="ECO:0000305" key="3"/>
<dbReference type="EMBL" id="AM295007">
    <property type="protein sequence ID" value="CAM29410.1"/>
    <property type="molecule type" value="Genomic_DNA"/>
</dbReference>
<dbReference type="RefSeq" id="WP_002986615.1">
    <property type="nucleotide sequence ID" value="NC_009332.1"/>
</dbReference>
<dbReference type="SMR" id="A2RC38"/>
<dbReference type="GeneID" id="69900050"/>
<dbReference type="KEGG" id="spf:SpyM50067"/>
<dbReference type="HOGENOM" id="CLU_103849_1_1_9"/>
<dbReference type="GO" id="GO:0005829">
    <property type="term" value="C:cytosol"/>
    <property type="evidence" value="ECO:0007669"/>
    <property type="project" value="TreeGrafter"/>
</dbReference>
<dbReference type="GO" id="GO:0015935">
    <property type="term" value="C:small ribosomal subunit"/>
    <property type="evidence" value="ECO:0007669"/>
    <property type="project" value="TreeGrafter"/>
</dbReference>
<dbReference type="GO" id="GO:0019843">
    <property type="term" value="F:rRNA binding"/>
    <property type="evidence" value="ECO:0007669"/>
    <property type="project" value="UniProtKB-UniRule"/>
</dbReference>
<dbReference type="GO" id="GO:0003735">
    <property type="term" value="F:structural constituent of ribosome"/>
    <property type="evidence" value="ECO:0007669"/>
    <property type="project" value="InterPro"/>
</dbReference>
<dbReference type="GO" id="GO:0000049">
    <property type="term" value="F:tRNA binding"/>
    <property type="evidence" value="ECO:0007669"/>
    <property type="project" value="UniProtKB-UniRule"/>
</dbReference>
<dbReference type="GO" id="GO:0006412">
    <property type="term" value="P:translation"/>
    <property type="evidence" value="ECO:0007669"/>
    <property type="project" value="UniProtKB-UniRule"/>
</dbReference>
<dbReference type="FunFam" id="1.10.8.50:FF:000001">
    <property type="entry name" value="30S ribosomal protein S13"/>
    <property type="match status" value="1"/>
</dbReference>
<dbReference type="FunFam" id="4.10.910.10:FF:000001">
    <property type="entry name" value="30S ribosomal protein S13"/>
    <property type="match status" value="1"/>
</dbReference>
<dbReference type="Gene3D" id="1.10.8.50">
    <property type="match status" value="1"/>
</dbReference>
<dbReference type="Gene3D" id="4.10.910.10">
    <property type="entry name" value="30s ribosomal protein s13, domain 2"/>
    <property type="match status" value="1"/>
</dbReference>
<dbReference type="HAMAP" id="MF_01315">
    <property type="entry name" value="Ribosomal_uS13"/>
    <property type="match status" value="1"/>
</dbReference>
<dbReference type="InterPro" id="IPR027437">
    <property type="entry name" value="Rbsml_uS13_C"/>
</dbReference>
<dbReference type="InterPro" id="IPR001892">
    <property type="entry name" value="Ribosomal_uS13"/>
</dbReference>
<dbReference type="InterPro" id="IPR010979">
    <property type="entry name" value="Ribosomal_uS13-like_H2TH"/>
</dbReference>
<dbReference type="InterPro" id="IPR019980">
    <property type="entry name" value="Ribosomal_uS13_bac-type"/>
</dbReference>
<dbReference type="InterPro" id="IPR018269">
    <property type="entry name" value="Ribosomal_uS13_CS"/>
</dbReference>
<dbReference type="NCBIfam" id="TIGR03631">
    <property type="entry name" value="uS13_bact"/>
    <property type="match status" value="1"/>
</dbReference>
<dbReference type="PANTHER" id="PTHR10871">
    <property type="entry name" value="30S RIBOSOMAL PROTEIN S13/40S RIBOSOMAL PROTEIN S18"/>
    <property type="match status" value="1"/>
</dbReference>
<dbReference type="PANTHER" id="PTHR10871:SF1">
    <property type="entry name" value="SMALL RIBOSOMAL SUBUNIT PROTEIN US13M"/>
    <property type="match status" value="1"/>
</dbReference>
<dbReference type="Pfam" id="PF00416">
    <property type="entry name" value="Ribosomal_S13"/>
    <property type="match status" value="1"/>
</dbReference>
<dbReference type="PIRSF" id="PIRSF002134">
    <property type="entry name" value="Ribosomal_S13"/>
    <property type="match status" value="1"/>
</dbReference>
<dbReference type="SUPFAM" id="SSF46946">
    <property type="entry name" value="S13-like H2TH domain"/>
    <property type="match status" value="1"/>
</dbReference>
<dbReference type="PROSITE" id="PS00646">
    <property type="entry name" value="RIBOSOMAL_S13_1"/>
    <property type="match status" value="1"/>
</dbReference>
<dbReference type="PROSITE" id="PS50159">
    <property type="entry name" value="RIBOSOMAL_S13_2"/>
    <property type="match status" value="1"/>
</dbReference>
<comment type="function">
    <text evidence="1">Located at the top of the head of the 30S subunit, it contacts several helices of the 16S rRNA. In the 70S ribosome it contacts the 23S rRNA (bridge B1a) and protein L5 of the 50S subunit (bridge B1b), connecting the 2 subunits; these bridges are implicated in subunit movement. Contacts the tRNAs in the A and P-sites.</text>
</comment>
<comment type="subunit">
    <text evidence="1">Part of the 30S ribosomal subunit. Forms a loose heterodimer with protein S19. Forms two bridges to the 50S subunit in the 70S ribosome.</text>
</comment>
<comment type="similarity">
    <text evidence="1">Belongs to the universal ribosomal protein uS13 family.</text>
</comment>
<name>RS13_STRPG</name>
<reference key="1">
    <citation type="journal article" date="2007" name="J. Bacteriol.">
        <title>Complete genome of acute rheumatic fever-associated serotype M5 Streptococcus pyogenes strain Manfredo.</title>
        <authorList>
            <person name="Holden M.T.G."/>
            <person name="Scott A."/>
            <person name="Cherevach I."/>
            <person name="Chillingworth T."/>
            <person name="Churcher C."/>
            <person name="Cronin A."/>
            <person name="Dowd L."/>
            <person name="Feltwell T."/>
            <person name="Hamlin N."/>
            <person name="Holroyd S."/>
            <person name="Jagels K."/>
            <person name="Moule S."/>
            <person name="Mungall K."/>
            <person name="Quail M.A."/>
            <person name="Price C."/>
            <person name="Rabbinowitsch E."/>
            <person name="Sharp S."/>
            <person name="Skelton J."/>
            <person name="Whitehead S."/>
            <person name="Barrell B.G."/>
            <person name="Kehoe M."/>
            <person name="Parkhill J."/>
        </authorList>
    </citation>
    <scope>NUCLEOTIDE SEQUENCE [LARGE SCALE GENOMIC DNA]</scope>
    <source>
        <strain>Manfredo</strain>
    </source>
</reference>
<protein>
    <recommendedName>
        <fullName evidence="1">Small ribosomal subunit protein uS13</fullName>
    </recommendedName>
    <alternativeName>
        <fullName evidence="3">30S ribosomal protein S13</fullName>
    </alternativeName>
</protein>
<gene>
    <name evidence="1" type="primary">rpsM</name>
    <name type="ordered locus">SpyM50067</name>
</gene>
<feature type="chain" id="PRO_0000306722" description="Small ribosomal subunit protein uS13">
    <location>
        <begin position="1"/>
        <end position="121"/>
    </location>
</feature>
<feature type="region of interest" description="Disordered" evidence="2">
    <location>
        <begin position="96"/>
        <end position="121"/>
    </location>
</feature>
<feature type="compositionally biased region" description="Basic residues" evidence="2">
    <location>
        <begin position="106"/>
        <end position="121"/>
    </location>
</feature>
<sequence>MARIAGVDIPNDKRVVISLTYVYGIGLATSKKILAAAGISEDIRVKDLTSDQEDAIRREVDAIKVEGDLRREVNMNIKRLMEIGSYRGIRHRRGLPVRGQNTKNNARTRKGKAVAIAGKKK</sequence>
<keyword id="KW-0687">Ribonucleoprotein</keyword>
<keyword id="KW-0689">Ribosomal protein</keyword>
<keyword id="KW-0694">RNA-binding</keyword>
<keyword id="KW-0699">rRNA-binding</keyword>
<keyword id="KW-0820">tRNA-binding</keyword>
<accession>A2RC38</accession>
<proteinExistence type="inferred from homology"/>